<name>YJDP_ECOL6</name>
<organism>
    <name type="scientific">Escherichia coli O6:H1 (strain CFT073 / ATCC 700928 / UPEC)</name>
    <dbReference type="NCBI Taxonomy" id="199310"/>
    <lineage>
        <taxon>Bacteria</taxon>
        <taxon>Pseudomonadati</taxon>
        <taxon>Pseudomonadota</taxon>
        <taxon>Gammaproteobacteria</taxon>
        <taxon>Enterobacterales</taxon>
        <taxon>Enterobacteriaceae</taxon>
        <taxon>Escherichia</taxon>
    </lineage>
</organism>
<sequence>MKRFPLFLLFTLLTLSTVPAQADIIDDTIGNIQQAINDAYNPDRGRDYEDSRDDGWQREVSDDRRRQYDDRRRQFEDRRRQLDDRQRQLDQERRQLEDEERRMEDEYGR</sequence>
<proteinExistence type="inferred from homology"/>
<accession>Q8FAW3</accession>
<protein>
    <recommendedName>
        <fullName>Uncharacterized protein YjdP</fullName>
    </recommendedName>
</protein>
<reference key="1">
    <citation type="journal article" date="2002" name="Proc. Natl. Acad. Sci. U.S.A.">
        <title>Extensive mosaic structure revealed by the complete genome sequence of uropathogenic Escherichia coli.</title>
        <authorList>
            <person name="Welch R.A."/>
            <person name="Burland V."/>
            <person name="Plunkett G. III"/>
            <person name="Redford P."/>
            <person name="Roesch P."/>
            <person name="Rasko D."/>
            <person name="Buckles E.L."/>
            <person name="Liou S.-R."/>
            <person name="Boutin A."/>
            <person name="Hackett J."/>
            <person name="Stroud D."/>
            <person name="Mayhew G.F."/>
            <person name="Rose D.J."/>
            <person name="Zhou S."/>
            <person name="Schwartz D.C."/>
            <person name="Perna N.T."/>
            <person name="Mobley H.L.T."/>
            <person name="Donnenberg M.S."/>
            <person name="Blattner F.R."/>
        </authorList>
    </citation>
    <scope>NUCLEOTIDE SEQUENCE [LARGE SCALE GENOMIC DNA]</scope>
    <source>
        <strain>CFT073 / ATCC 700928 / UPEC</strain>
    </source>
</reference>
<dbReference type="EMBL" id="AE014075">
    <property type="protein sequence ID" value="AAN83522.1"/>
    <property type="molecule type" value="Genomic_DNA"/>
</dbReference>
<dbReference type="RefSeq" id="WP_000819746.1">
    <property type="nucleotide sequence ID" value="NZ_CP051263.1"/>
</dbReference>
<dbReference type="SMR" id="Q8FAW3"/>
<dbReference type="GeneID" id="93777743"/>
<dbReference type="KEGG" id="ecc:c5097"/>
<dbReference type="eggNOG" id="ENOG5031VYC">
    <property type="taxonomic scope" value="Bacteria"/>
</dbReference>
<dbReference type="HOGENOM" id="CLU_176118_0_0_6"/>
<dbReference type="BioCyc" id="ECOL199310:C5097-MONOMER"/>
<dbReference type="Proteomes" id="UP000001410">
    <property type="component" value="Chromosome"/>
</dbReference>
<dbReference type="InterPro" id="IPR048164">
    <property type="entry name" value="YjdP-like"/>
</dbReference>
<dbReference type="NCBIfam" id="NF041443">
    <property type="entry name" value="DDRRRQL_YjdP"/>
    <property type="match status" value="1"/>
</dbReference>
<feature type="signal peptide" evidence="1">
    <location>
        <begin position="1"/>
        <end position="22"/>
    </location>
</feature>
<feature type="chain" id="PRO_0000228850" description="Uncharacterized protein YjdP">
    <location>
        <begin position="23"/>
        <end position="109"/>
    </location>
</feature>
<feature type="region of interest" description="Disordered" evidence="2">
    <location>
        <begin position="39"/>
        <end position="109"/>
    </location>
</feature>
<feature type="compositionally biased region" description="Basic and acidic residues" evidence="2">
    <location>
        <begin position="41"/>
        <end position="109"/>
    </location>
</feature>
<evidence type="ECO:0000255" key="1"/>
<evidence type="ECO:0000256" key="2">
    <source>
        <dbReference type="SAM" id="MobiDB-lite"/>
    </source>
</evidence>
<keyword id="KW-1185">Reference proteome</keyword>
<keyword id="KW-0732">Signal</keyword>
<gene>
    <name type="primary">yjdP</name>
    <name type="ordered locus">c5097</name>
</gene>